<gene>
    <name evidence="1" type="primary">tig</name>
    <name type="ordered locus">ECDH10B_0392</name>
</gene>
<accession>B1XFM4</accession>
<comment type="function">
    <text evidence="1">Involved in protein export. Acts as a chaperone by maintaining the newly synthesized protein in an open conformation. Functions as a peptidyl-prolyl cis-trans isomerase.</text>
</comment>
<comment type="catalytic activity">
    <reaction evidence="1">
        <text>[protein]-peptidylproline (omega=180) = [protein]-peptidylproline (omega=0)</text>
        <dbReference type="Rhea" id="RHEA:16237"/>
        <dbReference type="Rhea" id="RHEA-COMP:10747"/>
        <dbReference type="Rhea" id="RHEA-COMP:10748"/>
        <dbReference type="ChEBI" id="CHEBI:83833"/>
        <dbReference type="ChEBI" id="CHEBI:83834"/>
        <dbReference type="EC" id="5.2.1.8"/>
    </reaction>
</comment>
<comment type="subunit">
    <text evidence="1">Homodimer and monomer. In vivo most of the ribosomes are in complex with monomeric TF. Uncomplexed TF, however, is in a monomer-dimer equilibrium with approximately two thirds of TF existing in a dimeric state.</text>
</comment>
<comment type="subcellular location">
    <subcellularLocation>
        <location>Cytoplasm</location>
    </subcellularLocation>
    <text evidence="1">About half TF is bound to the ribosome near the polypeptide exit tunnel while the other half is free in the cytoplasm.</text>
</comment>
<comment type="domain">
    <text evidence="1">Consists of 3 domains; the N-terminus binds the ribosome, the middle domain has PPIase activity, while the C-terminus has intrinsic chaperone activity on its own.</text>
</comment>
<comment type="similarity">
    <text evidence="1">Belongs to the FKBP-type PPIase family. Tig subfamily.</text>
</comment>
<keyword id="KW-0131">Cell cycle</keyword>
<keyword id="KW-0132">Cell division</keyword>
<keyword id="KW-0143">Chaperone</keyword>
<keyword id="KW-0963">Cytoplasm</keyword>
<keyword id="KW-0413">Isomerase</keyword>
<keyword id="KW-0697">Rotamase</keyword>
<evidence type="ECO:0000255" key="1">
    <source>
        <dbReference type="HAMAP-Rule" id="MF_00303"/>
    </source>
</evidence>
<sequence length="432" mass="48193">MQVSVETTQGLGRRVTITIAADSIETAVKSELVNVAKKVRIDGFRKGKVPMNIVAQRYGASVRQDVLGDLMSRNFIDAIIKEKINPAGAPTYVPGEYKLGEDFTYSVEFEVYPEVELQGLEAIEVEKPIVEVTDADVDGMLDTLRKQQATWKEKDGAVEAEDRVTIDFTGSVDGEEFEGGKASDFVLAMGQGRMIPGFEDGIKGHKAGEEFTIDVTFPEEYHAENLKGKAAKFAINLKKVEERELPELTAEFIKRFGVEDGSVEGLRAEVRKNMERELKSAIRNRVKSQAIEGLVKANDIDVPAALIDSEIDVLRRQAAQRFGGNEKQALELPRELFEEQAKRRVVVGLLLGEVIRTNELKADEERVKGLIEEMASAYEDPKEVIEFYSKNKELMDNMRNVALEEQAVEAVLAKAKVTEKETTFNELMNQQA</sequence>
<proteinExistence type="inferred from homology"/>
<protein>
    <recommendedName>
        <fullName evidence="1">Trigger factor</fullName>
        <shortName evidence="1">TF</shortName>
        <ecNumber evidence="1">5.2.1.8</ecNumber>
    </recommendedName>
    <alternativeName>
        <fullName evidence="1">PPIase</fullName>
    </alternativeName>
</protein>
<feature type="chain" id="PRO_1000115531" description="Trigger factor">
    <location>
        <begin position="1"/>
        <end position="432"/>
    </location>
</feature>
<feature type="domain" description="PPIase FKBP-type" evidence="1">
    <location>
        <begin position="161"/>
        <end position="246"/>
    </location>
</feature>
<dbReference type="EC" id="5.2.1.8" evidence="1"/>
<dbReference type="EMBL" id="CP000948">
    <property type="protein sequence ID" value="ACB01564.1"/>
    <property type="molecule type" value="Genomic_DNA"/>
</dbReference>
<dbReference type="RefSeq" id="WP_001198386.1">
    <property type="nucleotide sequence ID" value="NC_010473.1"/>
</dbReference>
<dbReference type="SMR" id="B1XFM4"/>
<dbReference type="GeneID" id="75202861"/>
<dbReference type="KEGG" id="ecd:ECDH10B_0392"/>
<dbReference type="HOGENOM" id="CLU_033058_2_0_6"/>
<dbReference type="GO" id="GO:0005737">
    <property type="term" value="C:cytoplasm"/>
    <property type="evidence" value="ECO:0007669"/>
    <property type="project" value="UniProtKB-SubCell"/>
</dbReference>
<dbReference type="GO" id="GO:0003755">
    <property type="term" value="F:peptidyl-prolyl cis-trans isomerase activity"/>
    <property type="evidence" value="ECO:0007669"/>
    <property type="project" value="UniProtKB-UniRule"/>
</dbReference>
<dbReference type="GO" id="GO:0044183">
    <property type="term" value="F:protein folding chaperone"/>
    <property type="evidence" value="ECO:0007669"/>
    <property type="project" value="TreeGrafter"/>
</dbReference>
<dbReference type="GO" id="GO:0043022">
    <property type="term" value="F:ribosome binding"/>
    <property type="evidence" value="ECO:0007669"/>
    <property type="project" value="TreeGrafter"/>
</dbReference>
<dbReference type="GO" id="GO:0051083">
    <property type="term" value="P:'de novo' cotranslational protein folding"/>
    <property type="evidence" value="ECO:0007669"/>
    <property type="project" value="TreeGrafter"/>
</dbReference>
<dbReference type="GO" id="GO:0051301">
    <property type="term" value="P:cell division"/>
    <property type="evidence" value="ECO:0007669"/>
    <property type="project" value="UniProtKB-KW"/>
</dbReference>
<dbReference type="GO" id="GO:0061077">
    <property type="term" value="P:chaperone-mediated protein folding"/>
    <property type="evidence" value="ECO:0007669"/>
    <property type="project" value="TreeGrafter"/>
</dbReference>
<dbReference type="GO" id="GO:0015031">
    <property type="term" value="P:protein transport"/>
    <property type="evidence" value="ECO:0007669"/>
    <property type="project" value="UniProtKB-UniRule"/>
</dbReference>
<dbReference type="GO" id="GO:0043335">
    <property type="term" value="P:protein unfolding"/>
    <property type="evidence" value="ECO:0007669"/>
    <property type="project" value="TreeGrafter"/>
</dbReference>
<dbReference type="FunFam" id="1.10.3120.10:FF:000001">
    <property type="entry name" value="Trigger factor"/>
    <property type="match status" value="1"/>
</dbReference>
<dbReference type="FunFam" id="3.10.50.40:FF:000001">
    <property type="entry name" value="Trigger factor"/>
    <property type="match status" value="1"/>
</dbReference>
<dbReference type="FunFam" id="3.30.70.1050:FF:000001">
    <property type="entry name" value="Trigger factor"/>
    <property type="match status" value="1"/>
</dbReference>
<dbReference type="Gene3D" id="3.10.50.40">
    <property type="match status" value="1"/>
</dbReference>
<dbReference type="Gene3D" id="3.30.70.1050">
    <property type="entry name" value="Trigger factor ribosome-binding domain"/>
    <property type="match status" value="1"/>
</dbReference>
<dbReference type="Gene3D" id="1.10.3120.10">
    <property type="entry name" value="Trigger factor, C-terminal domain"/>
    <property type="match status" value="1"/>
</dbReference>
<dbReference type="HAMAP" id="MF_00303">
    <property type="entry name" value="Trigger_factor_Tig"/>
    <property type="match status" value="1"/>
</dbReference>
<dbReference type="InterPro" id="IPR046357">
    <property type="entry name" value="PPIase_dom_sf"/>
</dbReference>
<dbReference type="InterPro" id="IPR001179">
    <property type="entry name" value="PPIase_FKBP_dom"/>
</dbReference>
<dbReference type="InterPro" id="IPR005215">
    <property type="entry name" value="Trig_fac"/>
</dbReference>
<dbReference type="InterPro" id="IPR008880">
    <property type="entry name" value="Trigger_fac_C"/>
</dbReference>
<dbReference type="InterPro" id="IPR037041">
    <property type="entry name" value="Trigger_fac_C_sf"/>
</dbReference>
<dbReference type="InterPro" id="IPR008881">
    <property type="entry name" value="Trigger_fac_ribosome-bd_bac"/>
</dbReference>
<dbReference type="InterPro" id="IPR036611">
    <property type="entry name" value="Trigger_fac_ribosome-bd_sf"/>
</dbReference>
<dbReference type="InterPro" id="IPR027304">
    <property type="entry name" value="Trigger_fact/SurA_dom_sf"/>
</dbReference>
<dbReference type="NCBIfam" id="TIGR00115">
    <property type="entry name" value="tig"/>
    <property type="match status" value="1"/>
</dbReference>
<dbReference type="PANTHER" id="PTHR30560">
    <property type="entry name" value="TRIGGER FACTOR CHAPERONE AND PEPTIDYL-PROLYL CIS/TRANS ISOMERASE"/>
    <property type="match status" value="1"/>
</dbReference>
<dbReference type="PANTHER" id="PTHR30560:SF3">
    <property type="entry name" value="TRIGGER FACTOR-LIKE PROTEIN TIG, CHLOROPLASTIC"/>
    <property type="match status" value="1"/>
</dbReference>
<dbReference type="Pfam" id="PF00254">
    <property type="entry name" value="FKBP_C"/>
    <property type="match status" value="1"/>
</dbReference>
<dbReference type="Pfam" id="PF05698">
    <property type="entry name" value="Trigger_C"/>
    <property type="match status" value="1"/>
</dbReference>
<dbReference type="Pfam" id="PF05697">
    <property type="entry name" value="Trigger_N"/>
    <property type="match status" value="1"/>
</dbReference>
<dbReference type="PIRSF" id="PIRSF003095">
    <property type="entry name" value="Trigger_factor"/>
    <property type="match status" value="1"/>
</dbReference>
<dbReference type="SUPFAM" id="SSF54534">
    <property type="entry name" value="FKBP-like"/>
    <property type="match status" value="1"/>
</dbReference>
<dbReference type="SUPFAM" id="SSF109998">
    <property type="entry name" value="Triger factor/SurA peptide-binding domain-like"/>
    <property type="match status" value="1"/>
</dbReference>
<dbReference type="SUPFAM" id="SSF102735">
    <property type="entry name" value="Trigger factor ribosome-binding domain"/>
    <property type="match status" value="1"/>
</dbReference>
<dbReference type="PROSITE" id="PS50059">
    <property type="entry name" value="FKBP_PPIASE"/>
    <property type="match status" value="1"/>
</dbReference>
<organism>
    <name type="scientific">Escherichia coli (strain K12 / DH10B)</name>
    <dbReference type="NCBI Taxonomy" id="316385"/>
    <lineage>
        <taxon>Bacteria</taxon>
        <taxon>Pseudomonadati</taxon>
        <taxon>Pseudomonadota</taxon>
        <taxon>Gammaproteobacteria</taxon>
        <taxon>Enterobacterales</taxon>
        <taxon>Enterobacteriaceae</taxon>
        <taxon>Escherichia</taxon>
    </lineage>
</organism>
<reference key="1">
    <citation type="journal article" date="2008" name="J. Bacteriol.">
        <title>The complete genome sequence of Escherichia coli DH10B: insights into the biology of a laboratory workhorse.</title>
        <authorList>
            <person name="Durfee T."/>
            <person name="Nelson R."/>
            <person name="Baldwin S."/>
            <person name="Plunkett G. III"/>
            <person name="Burland V."/>
            <person name="Mau B."/>
            <person name="Petrosino J.F."/>
            <person name="Qin X."/>
            <person name="Muzny D.M."/>
            <person name="Ayele M."/>
            <person name="Gibbs R.A."/>
            <person name="Csorgo B."/>
            <person name="Posfai G."/>
            <person name="Weinstock G.M."/>
            <person name="Blattner F.R."/>
        </authorList>
    </citation>
    <scope>NUCLEOTIDE SEQUENCE [LARGE SCALE GENOMIC DNA]</scope>
    <source>
        <strain>K12 / DH10B</strain>
    </source>
</reference>
<name>TIG_ECODH</name>